<name>GLPK_RHIR8</name>
<organism>
    <name type="scientific">Rhizobium rhizogenes (strain K84 / ATCC BAA-868)</name>
    <name type="common">Agrobacterium radiobacter</name>
    <dbReference type="NCBI Taxonomy" id="311403"/>
    <lineage>
        <taxon>Bacteria</taxon>
        <taxon>Pseudomonadati</taxon>
        <taxon>Pseudomonadota</taxon>
        <taxon>Alphaproteobacteria</taxon>
        <taxon>Hyphomicrobiales</taxon>
        <taxon>Rhizobiaceae</taxon>
        <taxon>Rhizobium/Agrobacterium group</taxon>
        <taxon>Rhizobium</taxon>
    </lineage>
</organism>
<gene>
    <name evidence="1" type="primary">glpK</name>
    <name type="ordered locus">Arad_3310</name>
</gene>
<comment type="function">
    <text evidence="1">Key enzyme in the regulation of glycerol uptake and metabolism. Catalyzes the phosphorylation of glycerol to yield sn-glycerol 3-phosphate.</text>
</comment>
<comment type="catalytic activity">
    <reaction evidence="1">
        <text>glycerol + ATP = sn-glycerol 3-phosphate + ADP + H(+)</text>
        <dbReference type="Rhea" id="RHEA:21644"/>
        <dbReference type="ChEBI" id="CHEBI:15378"/>
        <dbReference type="ChEBI" id="CHEBI:17754"/>
        <dbReference type="ChEBI" id="CHEBI:30616"/>
        <dbReference type="ChEBI" id="CHEBI:57597"/>
        <dbReference type="ChEBI" id="CHEBI:456216"/>
        <dbReference type="EC" id="2.7.1.30"/>
    </reaction>
</comment>
<comment type="activity regulation">
    <text evidence="1">Inhibited by fructose 1,6-bisphosphate (FBP).</text>
</comment>
<comment type="pathway">
    <text evidence="1">Polyol metabolism; glycerol degradation via glycerol kinase pathway; sn-glycerol 3-phosphate from glycerol: step 1/1.</text>
</comment>
<comment type="similarity">
    <text evidence="1">Belongs to the FGGY kinase family.</text>
</comment>
<sequence length="498" mass="54218">MGGYVLAIDQGTTSTRAIVFDGNMKVAGVGQKEFTQHYPKPGWVEHDPEEIWASVLFTVGKAITAAGITAKDIAAVGITNQRETVVVWDRETGKPIHNAIVWQDRRTASYCDKLKRQDLEKLFTRRTGLLLDPYFSGTKLSWMLANVKGARARAAKGELCFGTIDTFLIWRLTGGKSFVTDATNASRTLMYNIASNAWDEDLLEILRVPAAMLPEVKDCAADFGITDASLFGATIPILGVAGDQQAATIGQACFERGMMKSTYGTGCFALLNTGTDIVRSKNRLLTTIAYRLDGETTYALEGSIFIAGAAVQWLRDGLKAIKSAADSGALAEKADPLQEVYLVPAFTGLGAPHWDPDARGAIFGLTRNTGPEEIVRAALEAVCYQSRDLLDAMHKDWRNGNGKETVLRVDGGMVASDWTMQRLADLLDAPVDRPTILETTALGAAWLAGSRAGVWPDREGFAKAWARDRRFEPAMDEKTRSGKLKGWKDAVRRTLSAG</sequence>
<evidence type="ECO:0000255" key="1">
    <source>
        <dbReference type="HAMAP-Rule" id="MF_00186"/>
    </source>
</evidence>
<accession>B9J7X6</accession>
<reference key="1">
    <citation type="journal article" date="2009" name="J. Bacteriol.">
        <title>Genome sequences of three Agrobacterium biovars help elucidate the evolution of multichromosome genomes in bacteria.</title>
        <authorList>
            <person name="Slater S.C."/>
            <person name="Goldman B.S."/>
            <person name="Goodner B."/>
            <person name="Setubal J.C."/>
            <person name="Farrand S.K."/>
            <person name="Nester E.W."/>
            <person name="Burr T.J."/>
            <person name="Banta L."/>
            <person name="Dickerman A.W."/>
            <person name="Paulsen I."/>
            <person name="Otten L."/>
            <person name="Suen G."/>
            <person name="Welch R."/>
            <person name="Almeida N.F."/>
            <person name="Arnold F."/>
            <person name="Burton O.T."/>
            <person name="Du Z."/>
            <person name="Ewing A."/>
            <person name="Godsy E."/>
            <person name="Heisel S."/>
            <person name="Houmiel K.L."/>
            <person name="Jhaveri J."/>
            <person name="Lu J."/>
            <person name="Miller N.M."/>
            <person name="Norton S."/>
            <person name="Chen Q."/>
            <person name="Phoolcharoen W."/>
            <person name="Ohlin V."/>
            <person name="Ondrusek D."/>
            <person name="Pride N."/>
            <person name="Stricklin S.L."/>
            <person name="Sun J."/>
            <person name="Wheeler C."/>
            <person name="Wilson L."/>
            <person name="Zhu H."/>
            <person name="Wood D.W."/>
        </authorList>
    </citation>
    <scope>NUCLEOTIDE SEQUENCE [LARGE SCALE GENOMIC DNA]</scope>
    <source>
        <strain>K84 / ATCC BAA-868</strain>
    </source>
</reference>
<dbReference type="EC" id="2.7.1.30" evidence="1"/>
<dbReference type="EMBL" id="CP000628">
    <property type="protein sequence ID" value="ACM27297.1"/>
    <property type="molecule type" value="Genomic_DNA"/>
</dbReference>
<dbReference type="RefSeq" id="WP_012652016.1">
    <property type="nucleotide sequence ID" value="NC_011985.1"/>
</dbReference>
<dbReference type="SMR" id="B9J7X6"/>
<dbReference type="STRING" id="311403.Arad_3310"/>
<dbReference type="KEGG" id="ara:Arad_3310"/>
<dbReference type="eggNOG" id="COG0554">
    <property type="taxonomic scope" value="Bacteria"/>
</dbReference>
<dbReference type="HOGENOM" id="CLU_009281_2_3_5"/>
<dbReference type="UniPathway" id="UPA00618">
    <property type="reaction ID" value="UER00672"/>
</dbReference>
<dbReference type="Proteomes" id="UP000001600">
    <property type="component" value="Chromosome 1"/>
</dbReference>
<dbReference type="GO" id="GO:0005829">
    <property type="term" value="C:cytosol"/>
    <property type="evidence" value="ECO:0007669"/>
    <property type="project" value="TreeGrafter"/>
</dbReference>
<dbReference type="GO" id="GO:0005524">
    <property type="term" value="F:ATP binding"/>
    <property type="evidence" value="ECO:0007669"/>
    <property type="project" value="UniProtKB-UniRule"/>
</dbReference>
<dbReference type="GO" id="GO:0004370">
    <property type="term" value="F:glycerol kinase activity"/>
    <property type="evidence" value="ECO:0000250"/>
    <property type="project" value="UniProtKB"/>
</dbReference>
<dbReference type="GO" id="GO:0019563">
    <property type="term" value="P:glycerol catabolic process"/>
    <property type="evidence" value="ECO:0007669"/>
    <property type="project" value="UniProtKB-UniRule"/>
</dbReference>
<dbReference type="GO" id="GO:0006071">
    <property type="term" value="P:glycerol metabolic process"/>
    <property type="evidence" value="ECO:0000250"/>
    <property type="project" value="UniProtKB"/>
</dbReference>
<dbReference type="GO" id="GO:0006072">
    <property type="term" value="P:glycerol-3-phosphate metabolic process"/>
    <property type="evidence" value="ECO:0007669"/>
    <property type="project" value="InterPro"/>
</dbReference>
<dbReference type="CDD" id="cd07786">
    <property type="entry name" value="FGGY_EcGK_like"/>
    <property type="match status" value="1"/>
</dbReference>
<dbReference type="FunFam" id="3.30.420.40:FF:000007">
    <property type="entry name" value="Glycerol kinase"/>
    <property type="match status" value="1"/>
</dbReference>
<dbReference type="FunFam" id="3.30.420.40:FF:000008">
    <property type="entry name" value="Glycerol kinase"/>
    <property type="match status" value="1"/>
</dbReference>
<dbReference type="Gene3D" id="3.30.420.40">
    <property type="match status" value="2"/>
</dbReference>
<dbReference type="HAMAP" id="MF_00186">
    <property type="entry name" value="Glycerol_kin"/>
    <property type="match status" value="1"/>
</dbReference>
<dbReference type="InterPro" id="IPR043129">
    <property type="entry name" value="ATPase_NBD"/>
</dbReference>
<dbReference type="InterPro" id="IPR000577">
    <property type="entry name" value="Carb_kinase_FGGY"/>
</dbReference>
<dbReference type="InterPro" id="IPR018483">
    <property type="entry name" value="Carb_kinase_FGGY_CS"/>
</dbReference>
<dbReference type="InterPro" id="IPR018485">
    <property type="entry name" value="FGGY_C"/>
</dbReference>
<dbReference type="InterPro" id="IPR018484">
    <property type="entry name" value="FGGY_N"/>
</dbReference>
<dbReference type="InterPro" id="IPR005999">
    <property type="entry name" value="Glycerol_kin"/>
</dbReference>
<dbReference type="NCBIfam" id="TIGR01311">
    <property type="entry name" value="glycerol_kin"/>
    <property type="match status" value="1"/>
</dbReference>
<dbReference type="NCBIfam" id="NF000756">
    <property type="entry name" value="PRK00047.1"/>
    <property type="match status" value="1"/>
</dbReference>
<dbReference type="PANTHER" id="PTHR10196:SF78">
    <property type="entry name" value="GLYCEROL KINASE"/>
    <property type="match status" value="1"/>
</dbReference>
<dbReference type="PANTHER" id="PTHR10196">
    <property type="entry name" value="SUGAR KINASE"/>
    <property type="match status" value="1"/>
</dbReference>
<dbReference type="Pfam" id="PF02782">
    <property type="entry name" value="FGGY_C"/>
    <property type="match status" value="1"/>
</dbReference>
<dbReference type="Pfam" id="PF00370">
    <property type="entry name" value="FGGY_N"/>
    <property type="match status" value="1"/>
</dbReference>
<dbReference type="PIRSF" id="PIRSF000538">
    <property type="entry name" value="GlpK"/>
    <property type="match status" value="1"/>
</dbReference>
<dbReference type="SUPFAM" id="SSF53067">
    <property type="entry name" value="Actin-like ATPase domain"/>
    <property type="match status" value="2"/>
</dbReference>
<dbReference type="PROSITE" id="PS00445">
    <property type="entry name" value="FGGY_KINASES_2"/>
    <property type="match status" value="1"/>
</dbReference>
<keyword id="KW-0067">ATP-binding</keyword>
<keyword id="KW-0319">Glycerol metabolism</keyword>
<keyword id="KW-0418">Kinase</keyword>
<keyword id="KW-0547">Nucleotide-binding</keyword>
<keyword id="KW-0808">Transferase</keyword>
<feature type="chain" id="PRO_1000124176" description="Glycerol kinase">
    <location>
        <begin position="1"/>
        <end position="498"/>
    </location>
</feature>
<feature type="binding site" evidence="1">
    <location>
        <position position="12"/>
    </location>
    <ligand>
        <name>ADP</name>
        <dbReference type="ChEBI" id="CHEBI:456216"/>
    </ligand>
</feature>
<feature type="binding site" evidence="1">
    <location>
        <position position="12"/>
    </location>
    <ligand>
        <name>ATP</name>
        <dbReference type="ChEBI" id="CHEBI:30616"/>
    </ligand>
</feature>
<feature type="binding site" evidence="1">
    <location>
        <position position="12"/>
    </location>
    <ligand>
        <name>sn-glycerol 3-phosphate</name>
        <dbReference type="ChEBI" id="CHEBI:57597"/>
    </ligand>
</feature>
<feature type="binding site" evidence="1">
    <location>
        <position position="13"/>
    </location>
    <ligand>
        <name>ATP</name>
        <dbReference type="ChEBI" id="CHEBI:30616"/>
    </ligand>
</feature>
<feature type="binding site" evidence="1">
    <location>
        <position position="14"/>
    </location>
    <ligand>
        <name>ATP</name>
        <dbReference type="ChEBI" id="CHEBI:30616"/>
    </ligand>
</feature>
<feature type="binding site" evidence="1">
    <location>
        <position position="16"/>
    </location>
    <ligand>
        <name>ADP</name>
        <dbReference type="ChEBI" id="CHEBI:456216"/>
    </ligand>
</feature>
<feature type="binding site" evidence="1">
    <location>
        <position position="82"/>
    </location>
    <ligand>
        <name>glycerol</name>
        <dbReference type="ChEBI" id="CHEBI:17754"/>
    </ligand>
</feature>
<feature type="binding site" evidence="1">
    <location>
        <position position="82"/>
    </location>
    <ligand>
        <name>sn-glycerol 3-phosphate</name>
        <dbReference type="ChEBI" id="CHEBI:57597"/>
    </ligand>
</feature>
<feature type="binding site" evidence="1">
    <location>
        <position position="83"/>
    </location>
    <ligand>
        <name>glycerol</name>
        <dbReference type="ChEBI" id="CHEBI:17754"/>
    </ligand>
</feature>
<feature type="binding site" evidence="1">
    <location>
        <position position="83"/>
    </location>
    <ligand>
        <name>sn-glycerol 3-phosphate</name>
        <dbReference type="ChEBI" id="CHEBI:57597"/>
    </ligand>
</feature>
<feature type="binding site" evidence="1">
    <location>
        <position position="134"/>
    </location>
    <ligand>
        <name>glycerol</name>
        <dbReference type="ChEBI" id="CHEBI:17754"/>
    </ligand>
</feature>
<feature type="binding site" evidence="1">
    <location>
        <position position="134"/>
    </location>
    <ligand>
        <name>sn-glycerol 3-phosphate</name>
        <dbReference type="ChEBI" id="CHEBI:57597"/>
    </ligand>
</feature>
<feature type="binding site" evidence="1">
    <location>
        <position position="243"/>
    </location>
    <ligand>
        <name>glycerol</name>
        <dbReference type="ChEBI" id="CHEBI:17754"/>
    </ligand>
</feature>
<feature type="binding site" evidence="1">
    <location>
        <position position="243"/>
    </location>
    <ligand>
        <name>sn-glycerol 3-phosphate</name>
        <dbReference type="ChEBI" id="CHEBI:57597"/>
    </ligand>
</feature>
<feature type="binding site" evidence="1">
    <location>
        <position position="244"/>
    </location>
    <ligand>
        <name>glycerol</name>
        <dbReference type="ChEBI" id="CHEBI:17754"/>
    </ligand>
</feature>
<feature type="binding site" evidence="1">
    <location>
        <position position="265"/>
    </location>
    <ligand>
        <name>ADP</name>
        <dbReference type="ChEBI" id="CHEBI:456216"/>
    </ligand>
</feature>
<feature type="binding site" evidence="1">
    <location>
        <position position="265"/>
    </location>
    <ligand>
        <name>ATP</name>
        <dbReference type="ChEBI" id="CHEBI:30616"/>
    </ligand>
</feature>
<feature type="binding site" evidence="1">
    <location>
        <position position="308"/>
    </location>
    <ligand>
        <name>ADP</name>
        <dbReference type="ChEBI" id="CHEBI:456216"/>
    </ligand>
</feature>
<feature type="binding site" evidence="1">
    <location>
        <position position="308"/>
    </location>
    <ligand>
        <name>ATP</name>
        <dbReference type="ChEBI" id="CHEBI:30616"/>
    </ligand>
</feature>
<feature type="binding site" evidence="1">
    <location>
        <position position="312"/>
    </location>
    <ligand>
        <name>ATP</name>
        <dbReference type="ChEBI" id="CHEBI:30616"/>
    </ligand>
</feature>
<feature type="binding site" evidence="1">
    <location>
        <position position="412"/>
    </location>
    <ligand>
        <name>ADP</name>
        <dbReference type="ChEBI" id="CHEBI:456216"/>
    </ligand>
</feature>
<feature type="binding site" evidence="1">
    <location>
        <position position="412"/>
    </location>
    <ligand>
        <name>ATP</name>
        <dbReference type="ChEBI" id="CHEBI:30616"/>
    </ligand>
</feature>
<protein>
    <recommendedName>
        <fullName evidence="1">Glycerol kinase</fullName>
        <ecNumber evidence="1">2.7.1.30</ecNumber>
    </recommendedName>
    <alternativeName>
        <fullName evidence="1">ATP:glycerol 3-phosphotransferase</fullName>
    </alternativeName>
    <alternativeName>
        <fullName evidence="1">Glycerokinase</fullName>
        <shortName evidence="1">GK</shortName>
    </alternativeName>
</protein>
<proteinExistence type="inferred from homology"/>